<proteinExistence type="uncertain"/>
<protein>
    <recommendedName>
        <fullName>Putative uncharacterized protein YDR290W</fullName>
    </recommendedName>
</protein>
<sequence length="109" mass="13049">MYSFHISATLGASLYCRSNHFEALEIDSWESSNVFNLVVNCSEEKGIPSILILDYCFLQIFYLFVKTFFACTYIIMLAFQVYIFLKEKNNFFIFRYKTEPLYILRWLRS</sequence>
<accession>P87280</accession>
<comment type="subcellular location">
    <subcellularLocation>
        <location evidence="2">Membrane</location>
        <topology evidence="2">Single-pass membrane protein</topology>
    </subcellularLocation>
</comment>
<comment type="miscellaneous">
    <text evidence="2">Partially overlaps RTT103.</text>
</comment>
<comment type="caution">
    <text evidence="3">Product of a dubious gene prediction unlikely to encode a functional protein. Because of that it is not part of the S.cerevisiae S288c complete/reference proteome set.</text>
</comment>
<reference key="1">
    <citation type="journal article" date="1997" name="Nature">
        <title>The nucleotide sequence of Saccharomyces cerevisiae chromosome IV.</title>
        <authorList>
            <person name="Jacq C."/>
            <person name="Alt-Moerbe J."/>
            <person name="Andre B."/>
            <person name="Arnold W."/>
            <person name="Bahr A."/>
            <person name="Ballesta J.P.G."/>
            <person name="Bargues M."/>
            <person name="Baron L."/>
            <person name="Becker A."/>
            <person name="Biteau N."/>
            <person name="Bloecker H."/>
            <person name="Blugeon C."/>
            <person name="Boskovic J."/>
            <person name="Brandt P."/>
            <person name="Brueckner M."/>
            <person name="Buitrago M.J."/>
            <person name="Coster F."/>
            <person name="Delaveau T."/>
            <person name="del Rey F."/>
            <person name="Dujon B."/>
            <person name="Eide L.G."/>
            <person name="Garcia-Cantalejo J.M."/>
            <person name="Goffeau A."/>
            <person name="Gomez-Peris A."/>
            <person name="Granotier C."/>
            <person name="Hanemann V."/>
            <person name="Hankeln T."/>
            <person name="Hoheisel J.D."/>
            <person name="Jaeger W."/>
            <person name="Jimenez A."/>
            <person name="Jonniaux J.-L."/>
            <person name="Kraemer C."/>
            <person name="Kuester H."/>
            <person name="Laamanen P."/>
            <person name="Legros Y."/>
            <person name="Louis E.J."/>
            <person name="Moeller-Rieker S."/>
            <person name="Monnet A."/>
            <person name="Moro M."/>
            <person name="Mueller-Auer S."/>
            <person name="Nussbaumer B."/>
            <person name="Paricio N."/>
            <person name="Paulin L."/>
            <person name="Perea J."/>
            <person name="Perez-Alonso M."/>
            <person name="Perez-Ortin J.E."/>
            <person name="Pohl T.M."/>
            <person name="Prydz H."/>
            <person name="Purnelle B."/>
            <person name="Rasmussen S.W."/>
            <person name="Remacha M.A."/>
            <person name="Revuelta J.L."/>
            <person name="Rieger M."/>
            <person name="Salom D."/>
            <person name="Saluz H.P."/>
            <person name="Saiz J.E."/>
            <person name="Saren A.-M."/>
            <person name="Schaefer M."/>
            <person name="Scharfe M."/>
            <person name="Schmidt E.R."/>
            <person name="Schneider C."/>
            <person name="Scholler P."/>
            <person name="Schwarz S."/>
            <person name="Soler-Mira A."/>
            <person name="Urrestarazu L.A."/>
            <person name="Verhasselt P."/>
            <person name="Vissers S."/>
            <person name="Voet M."/>
            <person name="Volckaert G."/>
            <person name="Wagner G."/>
            <person name="Wambutt R."/>
            <person name="Wedler E."/>
            <person name="Wedler H."/>
            <person name="Woelfl S."/>
            <person name="Harris D.E."/>
            <person name="Bowman S."/>
            <person name="Brown D."/>
            <person name="Churcher C.M."/>
            <person name="Connor R."/>
            <person name="Dedman K."/>
            <person name="Gentles S."/>
            <person name="Hamlin N."/>
            <person name="Hunt S."/>
            <person name="Jones L."/>
            <person name="McDonald S."/>
            <person name="Murphy L.D."/>
            <person name="Niblett D."/>
            <person name="Odell C."/>
            <person name="Oliver K."/>
            <person name="Rajandream M.A."/>
            <person name="Richards C."/>
            <person name="Shore L."/>
            <person name="Walsh S.V."/>
            <person name="Barrell B.G."/>
            <person name="Dietrich F.S."/>
            <person name="Mulligan J.T."/>
            <person name="Allen E."/>
            <person name="Araujo R."/>
            <person name="Aviles E."/>
            <person name="Berno A."/>
            <person name="Carpenter J."/>
            <person name="Chen E."/>
            <person name="Cherry J.M."/>
            <person name="Chung E."/>
            <person name="Duncan M."/>
            <person name="Hunicke-Smith S."/>
            <person name="Hyman R.W."/>
            <person name="Komp C."/>
            <person name="Lashkari D."/>
            <person name="Lew H."/>
            <person name="Lin D."/>
            <person name="Mosedale D."/>
            <person name="Nakahara K."/>
            <person name="Namath A."/>
            <person name="Oefner P."/>
            <person name="Oh C."/>
            <person name="Petel F.X."/>
            <person name="Roberts D."/>
            <person name="Schramm S."/>
            <person name="Schroeder M."/>
            <person name="Shogren T."/>
            <person name="Shroff N."/>
            <person name="Winant A."/>
            <person name="Yelton M.A."/>
            <person name="Botstein D."/>
            <person name="Davis R.W."/>
            <person name="Johnston M."/>
            <person name="Andrews S."/>
            <person name="Brinkman R."/>
            <person name="Cooper J."/>
            <person name="Ding H."/>
            <person name="Du Z."/>
            <person name="Favello A."/>
            <person name="Fulton L."/>
            <person name="Gattung S."/>
            <person name="Greco T."/>
            <person name="Hallsworth K."/>
            <person name="Hawkins J."/>
            <person name="Hillier L.W."/>
            <person name="Jier M."/>
            <person name="Johnson D."/>
            <person name="Johnston L."/>
            <person name="Kirsten J."/>
            <person name="Kucaba T."/>
            <person name="Langston Y."/>
            <person name="Latreille P."/>
            <person name="Le T."/>
            <person name="Mardis E."/>
            <person name="Menezes S."/>
            <person name="Miller N."/>
            <person name="Nhan M."/>
            <person name="Pauley A."/>
            <person name="Peluso D."/>
            <person name="Rifkin L."/>
            <person name="Riles L."/>
            <person name="Taich A."/>
            <person name="Trevaskis E."/>
            <person name="Vignati D."/>
            <person name="Wilcox L."/>
            <person name="Wohldman P."/>
            <person name="Vaudin M."/>
            <person name="Wilson R."/>
            <person name="Waterston R."/>
            <person name="Albermann K."/>
            <person name="Hani J."/>
            <person name="Heumann K."/>
            <person name="Kleine K."/>
            <person name="Mewes H.-W."/>
            <person name="Zollner A."/>
            <person name="Zaccaria P."/>
        </authorList>
    </citation>
    <scope>NUCLEOTIDE SEQUENCE [LARGE SCALE GENOMIC DNA]</scope>
    <source>
        <strain>ATCC 204508 / S288c</strain>
    </source>
</reference>
<reference key="2">
    <citation type="journal article" date="2014" name="G3 (Bethesda)">
        <title>The reference genome sequence of Saccharomyces cerevisiae: Then and now.</title>
        <authorList>
            <person name="Engel S.R."/>
            <person name="Dietrich F.S."/>
            <person name="Fisk D.G."/>
            <person name="Binkley G."/>
            <person name="Balakrishnan R."/>
            <person name="Costanzo M.C."/>
            <person name="Dwight S.S."/>
            <person name="Hitz B.C."/>
            <person name="Karra K."/>
            <person name="Nash R.S."/>
            <person name="Weng S."/>
            <person name="Wong E.D."/>
            <person name="Lloyd P."/>
            <person name="Skrzypek M.S."/>
            <person name="Miyasato S.R."/>
            <person name="Simison M."/>
            <person name="Cherry J.M."/>
        </authorList>
    </citation>
    <scope>GENOME REANNOTATION</scope>
    <source>
        <strain>ATCC 204508 / S288c</strain>
    </source>
</reference>
<keyword id="KW-0472">Membrane</keyword>
<keyword id="KW-0812">Transmembrane</keyword>
<keyword id="KW-1133">Transmembrane helix</keyword>
<feature type="chain" id="PRO_0000299882" description="Putative uncharacterized protein YDR290W">
    <location>
        <begin position="1"/>
        <end position="109"/>
    </location>
</feature>
<feature type="transmembrane region" description="Helical" evidence="1">
    <location>
        <begin position="63"/>
        <end position="85"/>
    </location>
</feature>
<gene>
    <name type="ordered locus">YDR290W</name>
</gene>
<evidence type="ECO:0000255" key="1"/>
<evidence type="ECO:0000305" key="2"/>
<evidence type="ECO:0000305" key="3">
    <source>
    </source>
</evidence>
<name>YD290_YEAST</name>
<organism>
    <name type="scientific">Saccharomyces cerevisiae (strain ATCC 204508 / S288c)</name>
    <name type="common">Baker's yeast</name>
    <dbReference type="NCBI Taxonomy" id="559292"/>
    <lineage>
        <taxon>Eukaryota</taxon>
        <taxon>Fungi</taxon>
        <taxon>Dikarya</taxon>
        <taxon>Ascomycota</taxon>
        <taxon>Saccharomycotina</taxon>
        <taxon>Saccharomycetes</taxon>
        <taxon>Saccharomycetales</taxon>
        <taxon>Saccharomycetaceae</taxon>
        <taxon>Saccharomyces</taxon>
    </lineage>
</organism>
<dbReference type="EMBL" id="U51031">
    <property type="protein sequence ID" value="AAB64476.1"/>
    <property type="molecule type" value="Genomic_DNA"/>
</dbReference>
<dbReference type="PIR" id="S70220">
    <property type="entry name" value="S70220"/>
</dbReference>
<dbReference type="DIP" id="DIP-4883N"/>
<dbReference type="STRING" id="4932.YDR290W"/>
<dbReference type="PaxDb" id="4932-YDR290W"/>
<dbReference type="EnsemblFungi" id="YDR290W_mRNA">
    <property type="protein sequence ID" value="YDR290W"/>
    <property type="gene ID" value="YDR290W"/>
</dbReference>
<dbReference type="AGR" id="SGD:S000002698"/>
<dbReference type="SGD" id="S000002698">
    <property type="gene designation" value="YDR290W"/>
</dbReference>
<dbReference type="HOGENOM" id="CLU_2186013_0_0_1"/>
<dbReference type="GO" id="GO:0016020">
    <property type="term" value="C:membrane"/>
    <property type="evidence" value="ECO:0007669"/>
    <property type="project" value="UniProtKB-SubCell"/>
</dbReference>